<proteinExistence type="inferred from homology"/>
<evidence type="ECO:0000250" key="1"/>
<evidence type="ECO:0000255" key="2">
    <source>
        <dbReference type="PROSITE-ProRule" id="PRU00307"/>
    </source>
</evidence>
<evidence type="ECO:0000305" key="3"/>
<reference key="1">
    <citation type="journal article" date="1997" name="Nature">
        <title>The complete genome sequence of the Gram-positive bacterium Bacillus subtilis.</title>
        <authorList>
            <person name="Kunst F."/>
            <person name="Ogasawara N."/>
            <person name="Moszer I."/>
            <person name="Albertini A.M."/>
            <person name="Alloni G."/>
            <person name="Azevedo V."/>
            <person name="Bertero M.G."/>
            <person name="Bessieres P."/>
            <person name="Bolotin A."/>
            <person name="Borchert S."/>
            <person name="Borriss R."/>
            <person name="Boursier L."/>
            <person name="Brans A."/>
            <person name="Braun M."/>
            <person name="Brignell S.C."/>
            <person name="Bron S."/>
            <person name="Brouillet S."/>
            <person name="Bruschi C.V."/>
            <person name="Caldwell B."/>
            <person name="Capuano V."/>
            <person name="Carter N.M."/>
            <person name="Choi S.-K."/>
            <person name="Codani J.-J."/>
            <person name="Connerton I.F."/>
            <person name="Cummings N.J."/>
            <person name="Daniel R.A."/>
            <person name="Denizot F."/>
            <person name="Devine K.M."/>
            <person name="Duesterhoeft A."/>
            <person name="Ehrlich S.D."/>
            <person name="Emmerson P.T."/>
            <person name="Entian K.-D."/>
            <person name="Errington J."/>
            <person name="Fabret C."/>
            <person name="Ferrari E."/>
            <person name="Foulger D."/>
            <person name="Fritz C."/>
            <person name="Fujita M."/>
            <person name="Fujita Y."/>
            <person name="Fuma S."/>
            <person name="Galizzi A."/>
            <person name="Galleron N."/>
            <person name="Ghim S.-Y."/>
            <person name="Glaser P."/>
            <person name="Goffeau A."/>
            <person name="Golightly E.J."/>
            <person name="Grandi G."/>
            <person name="Guiseppi G."/>
            <person name="Guy B.J."/>
            <person name="Haga K."/>
            <person name="Haiech J."/>
            <person name="Harwood C.R."/>
            <person name="Henaut A."/>
            <person name="Hilbert H."/>
            <person name="Holsappel S."/>
            <person name="Hosono S."/>
            <person name="Hullo M.-F."/>
            <person name="Itaya M."/>
            <person name="Jones L.-M."/>
            <person name="Joris B."/>
            <person name="Karamata D."/>
            <person name="Kasahara Y."/>
            <person name="Klaerr-Blanchard M."/>
            <person name="Klein C."/>
            <person name="Kobayashi Y."/>
            <person name="Koetter P."/>
            <person name="Koningstein G."/>
            <person name="Krogh S."/>
            <person name="Kumano M."/>
            <person name="Kurita K."/>
            <person name="Lapidus A."/>
            <person name="Lardinois S."/>
            <person name="Lauber J."/>
            <person name="Lazarevic V."/>
            <person name="Lee S.-M."/>
            <person name="Levine A."/>
            <person name="Liu H."/>
            <person name="Masuda S."/>
            <person name="Mauel C."/>
            <person name="Medigue C."/>
            <person name="Medina N."/>
            <person name="Mellado R.P."/>
            <person name="Mizuno M."/>
            <person name="Moestl D."/>
            <person name="Nakai S."/>
            <person name="Noback M."/>
            <person name="Noone D."/>
            <person name="O'Reilly M."/>
            <person name="Ogawa K."/>
            <person name="Ogiwara A."/>
            <person name="Oudega B."/>
            <person name="Park S.-H."/>
            <person name="Parro V."/>
            <person name="Pohl T.M."/>
            <person name="Portetelle D."/>
            <person name="Porwollik S."/>
            <person name="Prescott A.M."/>
            <person name="Presecan E."/>
            <person name="Pujic P."/>
            <person name="Purnelle B."/>
            <person name="Rapoport G."/>
            <person name="Rey M."/>
            <person name="Reynolds S."/>
            <person name="Rieger M."/>
            <person name="Rivolta C."/>
            <person name="Rocha E."/>
            <person name="Roche B."/>
            <person name="Rose M."/>
            <person name="Sadaie Y."/>
            <person name="Sato T."/>
            <person name="Scanlan E."/>
            <person name="Schleich S."/>
            <person name="Schroeter R."/>
            <person name="Scoffone F."/>
            <person name="Sekiguchi J."/>
            <person name="Sekowska A."/>
            <person name="Seror S.J."/>
            <person name="Serror P."/>
            <person name="Shin B.-S."/>
            <person name="Soldo B."/>
            <person name="Sorokin A."/>
            <person name="Tacconi E."/>
            <person name="Takagi T."/>
            <person name="Takahashi H."/>
            <person name="Takemaru K."/>
            <person name="Takeuchi M."/>
            <person name="Tamakoshi A."/>
            <person name="Tanaka T."/>
            <person name="Terpstra P."/>
            <person name="Tognoni A."/>
            <person name="Tosato V."/>
            <person name="Uchiyama S."/>
            <person name="Vandenbol M."/>
            <person name="Vannier F."/>
            <person name="Vassarotti A."/>
            <person name="Viari A."/>
            <person name="Wambutt R."/>
            <person name="Wedler E."/>
            <person name="Wedler H."/>
            <person name="Weitzenegger T."/>
            <person name="Winters P."/>
            <person name="Wipat A."/>
            <person name="Yamamoto H."/>
            <person name="Yamane K."/>
            <person name="Yasumoto K."/>
            <person name="Yata K."/>
            <person name="Yoshida K."/>
            <person name="Yoshikawa H.-F."/>
            <person name="Zumstein E."/>
            <person name="Yoshikawa H."/>
            <person name="Danchin A."/>
        </authorList>
    </citation>
    <scope>NUCLEOTIDE SEQUENCE [LARGE SCALE GENOMIC DNA]</scope>
    <source>
        <strain>168</strain>
    </source>
</reference>
<reference key="2">
    <citation type="journal article" date="2002" name="Mol. Microbiol.">
        <title>GabR, a member of a novel protein family, regulates the utilization of gamma-aminobutyrate in Bacillus subtilis.</title>
        <authorList>
            <person name="Belitsky B.R."/>
            <person name="Sonenshein A.L."/>
        </authorList>
    </citation>
    <scope>GENE FAMILY</scope>
</reference>
<accession>Q796Q6</accession>
<name>YISV_BACSU</name>
<organism>
    <name type="scientific">Bacillus subtilis (strain 168)</name>
    <dbReference type="NCBI Taxonomy" id="224308"/>
    <lineage>
        <taxon>Bacteria</taxon>
        <taxon>Bacillati</taxon>
        <taxon>Bacillota</taxon>
        <taxon>Bacilli</taxon>
        <taxon>Bacillales</taxon>
        <taxon>Bacillaceae</taxon>
        <taxon>Bacillus</taxon>
    </lineage>
</organism>
<comment type="cofactor">
    <cofactor evidence="1">
        <name>pyridoxal 5'-phosphate</name>
        <dbReference type="ChEBI" id="CHEBI:597326"/>
    </cofactor>
</comment>
<comment type="similarity">
    <text evidence="3">In the C-terminal section; belongs to the class-I pyridoxal-phosphate-dependent aminotransferase family.</text>
</comment>
<feature type="chain" id="PRO_0000360699" description="Uncharacterized HTH-type transcriptional regulator YisV">
    <location>
        <begin position="1"/>
        <end position="484"/>
    </location>
</feature>
<feature type="domain" description="HTH gntR-type" evidence="2">
    <location>
        <begin position="14"/>
        <end position="82"/>
    </location>
</feature>
<feature type="DNA-binding region" description="H-T-H motif" evidence="2">
    <location>
        <begin position="42"/>
        <end position="61"/>
    </location>
</feature>
<feature type="modified residue" description="N6-(pyridoxal phosphate)lysine" evidence="1">
    <location>
        <position position="327"/>
    </location>
</feature>
<keyword id="KW-0032">Aminotransferase</keyword>
<keyword id="KW-0238">DNA-binding</keyword>
<keyword id="KW-0663">Pyridoxal phosphate</keyword>
<keyword id="KW-1185">Reference proteome</keyword>
<keyword id="KW-0804">Transcription</keyword>
<keyword id="KW-0805">Transcription regulation</keyword>
<keyword id="KW-0808">Transferase</keyword>
<gene>
    <name type="primary">yisV</name>
    <name type="ordered locus">BSU10880</name>
</gene>
<dbReference type="EMBL" id="AL009126">
    <property type="protein sequence ID" value="CAB12927.2"/>
    <property type="molecule type" value="Genomic_DNA"/>
</dbReference>
<dbReference type="RefSeq" id="NP_388968.2">
    <property type="nucleotide sequence ID" value="NC_000964.3"/>
</dbReference>
<dbReference type="RefSeq" id="WP_010886472.1">
    <property type="nucleotide sequence ID" value="NZ_OZ025638.1"/>
</dbReference>
<dbReference type="SMR" id="Q796Q6"/>
<dbReference type="FunCoup" id="Q796Q6">
    <property type="interactions" value="254"/>
</dbReference>
<dbReference type="STRING" id="224308.BSU10880"/>
<dbReference type="PaxDb" id="224308-BSU10880"/>
<dbReference type="EnsemblBacteria" id="CAB12927">
    <property type="protein sequence ID" value="CAB12927"/>
    <property type="gene ID" value="BSU_10880"/>
</dbReference>
<dbReference type="GeneID" id="936360"/>
<dbReference type="KEGG" id="bsu:BSU10880"/>
<dbReference type="PATRIC" id="fig|224308.43.peg.1135"/>
<dbReference type="eggNOG" id="COG1167">
    <property type="taxonomic scope" value="Bacteria"/>
</dbReference>
<dbReference type="InParanoid" id="Q796Q6"/>
<dbReference type="OrthoDB" id="9802328at2"/>
<dbReference type="PhylomeDB" id="Q796Q6"/>
<dbReference type="BioCyc" id="BSUB:BSU10880-MONOMER"/>
<dbReference type="Proteomes" id="UP000001570">
    <property type="component" value="Chromosome"/>
</dbReference>
<dbReference type="GO" id="GO:0003677">
    <property type="term" value="F:DNA binding"/>
    <property type="evidence" value="ECO:0007669"/>
    <property type="project" value="UniProtKB-KW"/>
</dbReference>
<dbReference type="GO" id="GO:0003700">
    <property type="term" value="F:DNA-binding transcription factor activity"/>
    <property type="evidence" value="ECO:0007669"/>
    <property type="project" value="InterPro"/>
</dbReference>
<dbReference type="GO" id="GO:0030170">
    <property type="term" value="F:pyridoxal phosphate binding"/>
    <property type="evidence" value="ECO:0007669"/>
    <property type="project" value="InterPro"/>
</dbReference>
<dbReference type="GO" id="GO:0008483">
    <property type="term" value="F:transaminase activity"/>
    <property type="evidence" value="ECO:0000318"/>
    <property type="project" value="GO_Central"/>
</dbReference>
<dbReference type="GO" id="GO:1901605">
    <property type="term" value="P:alpha-amino acid metabolic process"/>
    <property type="evidence" value="ECO:0000318"/>
    <property type="project" value="GO_Central"/>
</dbReference>
<dbReference type="GO" id="GO:0009058">
    <property type="term" value="P:biosynthetic process"/>
    <property type="evidence" value="ECO:0007669"/>
    <property type="project" value="InterPro"/>
</dbReference>
<dbReference type="CDD" id="cd00609">
    <property type="entry name" value="AAT_like"/>
    <property type="match status" value="1"/>
</dbReference>
<dbReference type="CDD" id="cd07377">
    <property type="entry name" value="WHTH_GntR"/>
    <property type="match status" value="1"/>
</dbReference>
<dbReference type="FunFam" id="1.10.10.10:FF:000079">
    <property type="entry name" value="GntR family transcriptional regulator"/>
    <property type="match status" value="1"/>
</dbReference>
<dbReference type="FunFam" id="3.40.640.10:FF:000023">
    <property type="entry name" value="Transcriptional regulator, GntR family"/>
    <property type="match status" value="1"/>
</dbReference>
<dbReference type="Gene3D" id="3.90.1150.10">
    <property type="entry name" value="Aspartate Aminotransferase, domain 1"/>
    <property type="match status" value="1"/>
</dbReference>
<dbReference type="Gene3D" id="3.40.640.10">
    <property type="entry name" value="Type I PLP-dependent aspartate aminotransferase-like (Major domain)"/>
    <property type="match status" value="1"/>
</dbReference>
<dbReference type="Gene3D" id="1.10.10.10">
    <property type="entry name" value="Winged helix-like DNA-binding domain superfamily/Winged helix DNA-binding domain"/>
    <property type="match status" value="1"/>
</dbReference>
<dbReference type="InterPro" id="IPR004839">
    <property type="entry name" value="Aminotransferase_I/II_large"/>
</dbReference>
<dbReference type="InterPro" id="IPR051446">
    <property type="entry name" value="HTH_trans_reg/aminotransferase"/>
</dbReference>
<dbReference type="InterPro" id="IPR015424">
    <property type="entry name" value="PyrdxlP-dep_Trfase"/>
</dbReference>
<dbReference type="InterPro" id="IPR015421">
    <property type="entry name" value="PyrdxlP-dep_Trfase_major"/>
</dbReference>
<dbReference type="InterPro" id="IPR015422">
    <property type="entry name" value="PyrdxlP-dep_Trfase_small"/>
</dbReference>
<dbReference type="InterPro" id="IPR000524">
    <property type="entry name" value="Tscrpt_reg_HTH_GntR"/>
</dbReference>
<dbReference type="InterPro" id="IPR036388">
    <property type="entry name" value="WH-like_DNA-bd_sf"/>
</dbReference>
<dbReference type="InterPro" id="IPR036390">
    <property type="entry name" value="WH_DNA-bd_sf"/>
</dbReference>
<dbReference type="PANTHER" id="PTHR46577">
    <property type="entry name" value="HTH-TYPE TRANSCRIPTIONAL REGULATORY PROTEIN GABR"/>
    <property type="match status" value="1"/>
</dbReference>
<dbReference type="PANTHER" id="PTHR46577:SF2">
    <property type="entry name" value="TRANSCRIPTIONAL REGULATORY PROTEIN"/>
    <property type="match status" value="1"/>
</dbReference>
<dbReference type="Pfam" id="PF00155">
    <property type="entry name" value="Aminotran_1_2"/>
    <property type="match status" value="1"/>
</dbReference>
<dbReference type="Pfam" id="PF00392">
    <property type="entry name" value="GntR"/>
    <property type="match status" value="1"/>
</dbReference>
<dbReference type="PRINTS" id="PR00035">
    <property type="entry name" value="HTHGNTR"/>
</dbReference>
<dbReference type="SMART" id="SM00345">
    <property type="entry name" value="HTH_GNTR"/>
    <property type="match status" value="1"/>
</dbReference>
<dbReference type="SUPFAM" id="SSF53383">
    <property type="entry name" value="PLP-dependent transferases"/>
    <property type="match status" value="1"/>
</dbReference>
<dbReference type="SUPFAM" id="SSF46785">
    <property type="entry name" value="Winged helix' DNA-binding domain"/>
    <property type="match status" value="1"/>
</dbReference>
<dbReference type="PROSITE" id="PS50949">
    <property type="entry name" value="HTH_GNTR"/>
    <property type="match status" value="1"/>
</dbReference>
<sequence length="484" mass="54274">MTLSQWQPSRKSDVPLHRQIEQYMKDKILHGEWAVGTKIPSQRTLADMFQVNRSTVTAAIDELTSQGLLEGRKGGGTKVVNSTWSVLTAEPPLDWSDYVRSGIHRANSSIIQAINQNEPRADIIRLGTGELSPDLVPADTIGRMFQQINPGVLSLGYEQPKGNRQLREAVADHLKGKKIHVSPSAILIVSGALQALQLISIGLLKRDSVILTEKPSYLQSLHVFQSAGMRLRGLPMDDEGVKAGLVSSNRKQYGGQLLYTIPSFHNPTGTVMSEQRRKEIISLSKKEQMPIIEDDAYGDLWFEEKPPQPLKAMDHEGNILYLGAFSKTVSPGLRIGWLAGPEPVIERLADIKMQTDYGSSGLSQWAAAEWLSQGYYEEHLTWVRRKLKERRDAAVHFLERYAGDIATWRIPAGGFYIWVTFHKNLPVSRFFYELLKRQVLVNPGYIYDGEDRNSIRLSYSYASLGDLETGIKAAAETARRLMMS</sequence>
<protein>
    <recommendedName>
        <fullName>Uncharacterized HTH-type transcriptional regulator YisV</fullName>
    </recommendedName>
</protein>